<name>PYRF_METMP</name>
<comment type="function">
    <text evidence="1">Catalyzes the decarboxylation of orotidine 5'-monophosphate (OMP) to uridine 5'-monophosphate (UMP).</text>
</comment>
<comment type="catalytic activity">
    <reaction evidence="1">
        <text>orotidine 5'-phosphate + H(+) = UMP + CO2</text>
        <dbReference type="Rhea" id="RHEA:11596"/>
        <dbReference type="ChEBI" id="CHEBI:15378"/>
        <dbReference type="ChEBI" id="CHEBI:16526"/>
        <dbReference type="ChEBI" id="CHEBI:57538"/>
        <dbReference type="ChEBI" id="CHEBI:57865"/>
        <dbReference type="EC" id="4.1.1.23"/>
    </reaction>
</comment>
<comment type="pathway">
    <text evidence="1">Pyrimidine metabolism; UMP biosynthesis via de novo pathway; UMP from orotate: step 2/2.</text>
</comment>
<comment type="subunit">
    <text evidence="1">Homodimer.</text>
</comment>
<comment type="similarity">
    <text evidence="1">Belongs to the OMP decarboxylase family. Type 1 subfamily.</text>
</comment>
<dbReference type="EC" id="4.1.1.23" evidence="1"/>
<dbReference type="EMBL" id="BX950229">
    <property type="protein sequence ID" value="CAF30158.1"/>
    <property type="molecule type" value="Genomic_DNA"/>
</dbReference>
<dbReference type="RefSeq" id="WP_011170546.1">
    <property type="nucleotide sequence ID" value="NC_005791.1"/>
</dbReference>
<dbReference type="SMR" id="Q6LZM2"/>
<dbReference type="STRING" id="267377.MMP0602"/>
<dbReference type="EnsemblBacteria" id="CAF30158">
    <property type="protein sequence ID" value="CAF30158"/>
    <property type="gene ID" value="MMP0602"/>
</dbReference>
<dbReference type="GeneID" id="2761327"/>
<dbReference type="KEGG" id="mmp:MMP0602"/>
<dbReference type="PATRIC" id="fig|267377.15.peg.616"/>
<dbReference type="eggNOG" id="arCOG00081">
    <property type="taxonomic scope" value="Archaea"/>
</dbReference>
<dbReference type="HOGENOM" id="CLU_067069_2_0_2"/>
<dbReference type="OrthoDB" id="94124at2157"/>
<dbReference type="UniPathway" id="UPA00070">
    <property type="reaction ID" value="UER00120"/>
</dbReference>
<dbReference type="Proteomes" id="UP000000590">
    <property type="component" value="Chromosome"/>
</dbReference>
<dbReference type="GO" id="GO:0005829">
    <property type="term" value="C:cytosol"/>
    <property type="evidence" value="ECO:0007669"/>
    <property type="project" value="TreeGrafter"/>
</dbReference>
<dbReference type="GO" id="GO:0004590">
    <property type="term" value="F:orotidine-5'-phosphate decarboxylase activity"/>
    <property type="evidence" value="ECO:0007669"/>
    <property type="project" value="UniProtKB-UniRule"/>
</dbReference>
<dbReference type="GO" id="GO:0006207">
    <property type="term" value="P:'de novo' pyrimidine nucleobase biosynthetic process"/>
    <property type="evidence" value="ECO:0007669"/>
    <property type="project" value="InterPro"/>
</dbReference>
<dbReference type="GO" id="GO:0044205">
    <property type="term" value="P:'de novo' UMP biosynthetic process"/>
    <property type="evidence" value="ECO:0007669"/>
    <property type="project" value="UniProtKB-UniRule"/>
</dbReference>
<dbReference type="CDD" id="cd04725">
    <property type="entry name" value="OMP_decarboxylase_like"/>
    <property type="match status" value="1"/>
</dbReference>
<dbReference type="Gene3D" id="3.20.20.70">
    <property type="entry name" value="Aldolase class I"/>
    <property type="match status" value="1"/>
</dbReference>
<dbReference type="HAMAP" id="MF_01200_A">
    <property type="entry name" value="OMPdecase_type1_A"/>
    <property type="match status" value="1"/>
</dbReference>
<dbReference type="InterPro" id="IPR013785">
    <property type="entry name" value="Aldolase_TIM"/>
</dbReference>
<dbReference type="InterPro" id="IPR014732">
    <property type="entry name" value="OMPdecase"/>
</dbReference>
<dbReference type="InterPro" id="IPR047595">
    <property type="entry name" value="OMPdecase_arc"/>
</dbReference>
<dbReference type="InterPro" id="IPR018089">
    <property type="entry name" value="OMPdecase_AS"/>
</dbReference>
<dbReference type="InterPro" id="IPR001754">
    <property type="entry name" value="OMPdeCOase_dom"/>
</dbReference>
<dbReference type="InterPro" id="IPR011060">
    <property type="entry name" value="RibuloseP-bd_barrel"/>
</dbReference>
<dbReference type="NCBIfam" id="NF010386">
    <property type="entry name" value="PRK13813.1"/>
    <property type="match status" value="1"/>
</dbReference>
<dbReference type="NCBIfam" id="TIGR01740">
    <property type="entry name" value="pyrF"/>
    <property type="match status" value="1"/>
</dbReference>
<dbReference type="PANTHER" id="PTHR32119">
    <property type="entry name" value="OROTIDINE 5'-PHOSPHATE DECARBOXYLASE"/>
    <property type="match status" value="1"/>
</dbReference>
<dbReference type="PANTHER" id="PTHR32119:SF2">
    <property type="entry name" value="OROTIDINE 5'-PHOSPHATE DECARBOXYLASE"/>
    <property type="match status" value="1"/>
</dbReference>
<dbReference type="Pfam" id="PF00215">
    <property type="entry name" value="OMPdecase"/>
    <property type="match status" value="1"/>
</dbReference>
<dbReference type="SMART" id="SM00934">
    <property type="entry name" value="OMPdecase"/>
    <property type="match status" value="1"/>
</dbReference>
<dbReference type="SUPFAM" id="SSF51366">
    <property type="entry name" value="Ribulose-phoshate binding barrel"/>
    <property type="match status" value="1"/>
</dbReference>
<dbReference type="PROSITE" id="PS00156">
    <property type="entry name" value="OMPDECASE"/>
    <property type="match status" value="1"/>
</dbReference>
<feature type="chain" id="PRO_0000241935" description="Orotidine 5'-phosphate decarboxylase">
    <location>
        <begin position="1"/>
        <end position="217"/>
    </location>
</feature>
<feature type="active site" description="Proton donor" evidence="1">
    <location>
        <position position="66"/>
    </location>
</feature>
<feature type="binding site" evidence="1">
    <location>
        <position position="14"/>
    </location>
    <ligand>
        <name>substrate</name>
    </ligand>
</feature>
<feature type="binding site" evidence="1">
    <location>
        <position position="36"/>
    </location>
    <ligand>
        <name>substrate</name>
    </ligand>
</feature>
<feature type="binding site" evidence="1">
    <location>
        <begin position="64"/>
        <end position="73"/>
    </location>
    <ligand>
        <name>substrate</name>
    </ligand>
</feature>
<feature type="binding site" evidence="1">
    <location>
        <position position="120"/>
    </location>
    <ligand>
        <name>substrate</name>
    </ligand>
</feature>
<feature type="binding site" evidence="1">
    <location>
        <begin position="172"/>
        <end position="182"/>
    </location>
    <ligand>
        <name>substrate</name>
    </ligand>
</feature>
<feature type="binding site" evidence="1">
    <location>
        <position position="197"/>
    </location>
    <ligand>
        <name>substrate</name>
    </ligand>
</feature>
<feature type="binding site" evidence="1">
    <location>
        <position position="198"/>
    </location>
    <ligand>
        <name>substrate</name>
    </ligand>
</feature>
<proteinExistence type="inferred from homology"/>
<reference key="1">
    <citation type="journal article" date="2004" name="J. Bacteriol.">
        <title>Complete genome sequence of the genetically tractable hydrogenotrophic methanogen Methanococcus maripaludis.</title>
        <authorList>
            <person name="Hendrickson E.L."/>
            <person name="Kaul R."/>
            <person name="Zhou Y."/>
            <person name="Bovee D."/>
            <person name="Chapman P."/>
            <person name="Chung J."/>
            <person name="Conway de Macario E."/>
            <person name="Dodsworth J.A."/>
            <person name="Gillett W."/>
            <person name="Graham D.E."/>
            <person name="Hackett M."/>
            <person name="Haydock A.K."/>
            <person name="Kang A."/>
            <person name="Land M.L."/>
            <person name="Levy R."/>
            <person name="Lie T.J."/>
            <person name="Major T.A."/>
            <person name="Moore B.C."/>
            <person name="Porat I."/>
            <person name="Palmeiri A."/>
            <person name="Rouse G."/>
            <person name="Saenphimmachak C."/>
            <person name="Soell D."/>
            <person name="Van Dien S."/>
            <person name="Wang T."/>
            <person name="Whitman W.B."/>
            <person name="Xia Q."/>
            <person name="Zhang Y."/>
            <person name="Larimer F.W."/>
            <person name="Olson M.V."/>
            <person name="Leigh J.A."/>
        </authorList>
    </citation>
    <scope>NUCLEOTIDE SEQUENCE [LARGE SCALE GENOMIC DNA]</scope>
    <source>
        <strain>DSM 14266 / JCM 13030 / NBRC 101832 / S2 / LL</strain>
    </source>
</reference>
<gene>
    <name evidence="1" type="primary">pyrF</name>
    <name type="ordered locus">MMP0602</name>
</gene>
<evidence type="ECO:0000255" key="1">
    <source>
        <dbReference type="HAMAP-Rule" id="MF_01200"/>
    </source>
</evidence>
<keyword id="KW-0210">Decarboxylase</keyword>
<keyword id="KW-0456">Lyase</keyword>
<keyword id="KW-0665">Pyrimidine biosynthesis</keyword>
<keyword id="KW-1185">Reference proteome</keyword>
<sequence length="217" mass="23639">MYGESLVKLMLALDVMDEKKAILIAKETSEYVDSIKIGYPLVLATGLNIIDKIKESTNKEVICDFKVADIPSTNEKIAELTLNHADGIICQGFVGSDSVSAILNVARAKNKKVIVVTEMSHPGATEYLQNVAEDMAKMADRLKVDGIVAPSTRPERLKEIKSIAKDAFVISPGVGAQGGNLSDVLNVLNENDYVIIGRAIYENENPKNAAKKYKIQM</sequence>
<accession>Q6LZM2</accession>
<protein>
    <recommendedName>
        <fullName evidence="1">Orotidine 5'-phosphate decarboxylase</fullName>
        <ecNumber evidence="1">4.1.1.23</ecNumber>
    </recommendedName>
    <alternativeName>
        <fullName evidence="1">OMP decarboxylase</fullName>
        <shortName evidence="1">OMPDCase</shortName>
        <shortName evidence="1">OMPdecase</shortName>
    </alternativeName>
</protein>
<organism>
    <name type="scientific">Methanococcus maripaludis (strain DSM 14266 / JCM 13030 / NBRC 101832 / S2 / LL)</name>
    <dbReference type="NCBI Taxonomy" id="267377"/>
    <lineage>
        <taxon>Archaea</taxon>
        <taxon>Methanobacteriati</taxon>
        <taxon>Methanobacteriota</taxon>
        <taxon>Methanomada group</taxon>
        <taxon>Methanococci</taxon>
        <taxon>Methanococcales</taxon>
        <taxon>Methanococcaceae</taxon>
        <taxon>Methanococcus</taxon>
    </lineage>
</organism>